<dbReference type="EMBL" id="CP000920">
    <property type="protein sequence ID" value="ACO21946.1"/>
    <property type="molecule type" value="Genomic_DNA"/>
</dbReference>
<dbReference type="RefSeq" id="WP_000607034.1">
    <property type="nucleotide sequence ID" value="NC_012467.1"/>
</dbReference>
<dbReference type="SMR" id="C1CKX8"/>
<dbReference type="KEGG" id="spp:SPP_1276"/>
<dbReference type="HOGENOM" id="CLU_009621_2_1_9"/>
<dbReference type="GO" id="GO:0005737">
    <property type="term" value="C:cytoplasm"/>
    <property type="evidence" value="ECO:0007669"/>
    <property type="project" value="UniProtKB-SubCell"/>
</dbReference>
<dbReference type="GO" id="GO:0009380">
    <property type="term" value="C:excinuclease repair complex"/>
    <property type="evidence" value="ECO:0007669"/>
    <property type="project" value="InterPro"/>
</dbReference>
<dbReference type="GO" id="GO:0005524">
    <property type="term" value="F:ATP binding"/>
    <property type="evidence" value="ECO:0007669"/>
    <property type="project" value="UniProtKB-UniRule"/>
</dbReference>
<dbReference type="GO" id="GO:0016887">
    <property type="term" value="F:ATP hydrolysis activity"/>
    <property type="evidence" value="ECO:0007669"/>
    <property type="project" value="InterPro"/>
</dbReference>
<dbReference type="GO" id="GO:0003677">
    <property type="term" value="F:DNA binding"/>
    <property type="evidence" value="ECO:0007669"/>
    <property type="project" value="UniProtKB-UniRule"/>
</dbReference>
<dbReference type="GO" id="GO:0009381">
    <property type="term" value="F:excinuclease ABC activity"/>
    <property type="evidence" value="ECO:0007669"/>
    <property type="project" value="UniProtKB-UniRule"/>
</dbReference>
<dbReference type="GO" id="GO:0004386">
    <property type="term" value="F:helicase activity"/>
    <property type="evidence" value="ECO:0007669"/>
    <property type="project" value="UniProtKB-KW"/>
</dbReference>
<dbReference type="GO" id="GO:0006289">
    <property type="term" value="P:nucleotide-excision repair"/>
    <property type="evidence" value="ECO:0007669"/>
    <property type="project" value="UniProtKB-UniRule"/>
</dbReference>
<dbReference type="GO" id="GO:0009432">
    <property type="term" value="P:SOS response"/>
    <property type="evidence" value="ECO:0007669"/>
    <property type="project" value="UniProtKB-UniRule"/>
</dbReference>
<dbReference type="CDD" id="cd17916">
    <property type="entry name" value="DEXHc_UvrB"/>
    <property type="match status" value="1"/>
</dbReference>
<dbReference type="CDD" id="cd18790">
    <property type="entry name" value="SF2_C_UvrB"/>
    <property type="match status" value="1"/>
</dbReference>
<dbReference type="Gene3D" id="3.40.50.300">
    <property type="entry name" value="P-loop containing nucleotide triphosphate hydrolases"/>
    <property type="match status" value="3"/>
</dbReference>
<dbReference type="Gene3D" id="4.10.860.10">
    <property type="entry name" value="UVR domain"/>
    <property type="match status" value="1"/>
</dbReference>
<dbReference type="HAMAP" id="MF_00204">
    <property type="entry name" value="UvrB"/>
    <property type="match status" value="1"/>
</dbReference>
<dbReference type="InterPro" id="IPR006935">
    <property type="entry name" value="Helicase/UvrB_N"/>
</dbReference>
<dbReference type="InterPro" id="IPR014001">
    <property type="entry name" value="Helicase_ATP-bd"/>
</dbReference>
<dbReference type="InterPro" id="IPR001650">
    <property type="entry name" value="Helicase_C-like"/>
</dbReference>
<dbReference type="InterPro" id="IPR027417">
    <property type="entry name" value="P-loop_NTPase"/>
</dbReference>
<dbReference type="InterPro" id="IPR001943">
    <property type="entry name" value="UVR_dom"/>
</dbReference>
<dbReference type="InterPro" id="IPR036876">
    <property type="entry name" value="UVR_dom_sf"/>
</dbReference>
<dbReference type="InterPro" id="IPR004807">
    <property type="entry name" value="UvrB"/>
</dbReference>
<dbReference type="InterPro" id="IPR041471">
    <property type="entry name" value="UvrB_inter"/>
</dbReference>
<dbReference type="InterPro" id="IPR024759">
    <property type="entry name" value="UvrB_YAD/RRR_dom"/>
</dbReference>
<dbReference type="NCBIfam" id="NF003673">
    <property type="entry name" value="PRK05298.1"/>
    <property type="match status" value="1"/>
</dbReference>
<dbReference type="NCBIfam" id="TIGR00631">
    <property type="entry name" value="uvrb"/>
    <property type="match status" value="1"/>
</dbReference>
<dbReference type="PANTHER" id="PTHR24029">
    <property type="entry name" value="UVRABC SYSTEM PROTEIN B"/>
    <property type="match status" value="1"/>
</dbReference>
<dbReference type="PANTHER" id="PTHR24029:SF0">
    <property type="entry name" value="UVRABC SYSTEM PROTEIN B"/>
    <property type="match status" value="1"/>
</dbReference>
<dbReference type="Pfam" id="PF00271">
    <property type="entry name" value="Helicase_C"/>
    <property type="match status" value="1"/>
</dbReference>
<dbReference type="Pfam" id="PF04851">
    <property type="entry name" value="ResIII"/>
    <property type="match status" value="1"/>
</dbReference>
<dbReference type="Pfam" id="PF02151">
    <property type="entry name" value="UVR"/>
    <property type="match status" value="1"/>
</dbReference>
<dbReference type="Pfam" id="PF12344">
    <property type="entry name" value="UvrB"/>
    <property type="match status" value="1"/>
</dbReference>
<dbReference type="Pfam" id="PF17757">
    <property type="entry name" value="UvrB_inter"/>
    <property type="match status" value="1"/>
</dbReference>
<dbReference type="SMART" id="SM00487">
    <property type="entry name" value="DEXDc"/>
    <property type="match status" value="1"/>
</dbReference>
<dbReference type="SMART" id="SM00490">
    <property type="entry name" value="HELICc"/>
    <property type="match status" value="1"/>
</dbReference>
<dbReference type="SUPFAM" id="SSF46600">
    <property type="entry name" value="C-terminal UvrC-binding domain of UvrB"/>
    <property type="match status" value="1"/>
</dbReference>
<dbReference type="SUPFAM" id="SSF52540">
    <property type="entry name" value="P-loop containing nucleoside triphosphate hydrolases"/>
    <property type="match status" value="2"/>
</dbReference>
<dbReference type="PROSITE" id="PS51192">
    <property type="entry name" value="HELICASE_ATP_BIND_1"/>
    <property type="match status" value="1"/>
</dbReference>
<dbReference type="PROSITE" id="PS51194">
    <property type="entry name" value="HELICASE_CTER"/>
    <property type="match status" value="1"/>
</dbReference>
<dbReference type="PROSITE" id="PS50151">
    <property type="entry name" value="UVR"/>
    <property type="match status" value="1"/>
</dbReference>
<name>UVRB_STRZP</name>
<feature type="chain" id="PRO_1000200556" description="UvrABC system protein B">
    <location>
        <begin position="1"/>
        <end position="662"/>
    </location>
</feature>
<feature type="domain" description="Helicase ATP-binding" evidence="1">
    <location>
        <begin position="31"/>
        <end position="188"/>
    </location>
</feature>
<feature type="domain" description="Helicase C-terminal" evidence="1">
    <location>
        <begin position="435"/>
        <end position="601"/>
    </location>
</feature>
<feature type="domain" description="UVR" evidence="1">
    <location>
        <begin position="626"/>
        <end position="661"/>
    </location>
</feature>
<feature type="short sequence motif" description="Beta-hairpin">
    <location>
        <begin position="97"/>
        <end position="120"/>
    </location>
</feature>
<feature type="binding site" evidence="1">
    <location>
        <begin position="44"/>
        <end position="51"/>
    </location>
    <ligand>
        <name>ATP</name>
        <dbReference type="ChEBI" id="CHEBI:30616"/>
    </ligand>
</feature>
<gene>
    <name evidence="1" type="primary">uvrB</name>
    <name type="ordered locus">SPP_1276</name>
</gene>
<comment type="function">
    <text evidence="1">The UvrABC repair system catalyzes the recognition and processing of DNA lesions. A damage recognition complex composed of 2 UvrA and 2 UvrB subunits scans DNA for abnormalities. Upon binding of the UvrA(2)B(2) complex to a putative damaged site, the DNA wraps around one UvrB monomer. DNA wrap is dependent on ATP binding by UvrB and probably causes local melting of the DNA helix, facilitating insertion of UvrB beta-hairpin between the DNA strands. Then UvrB probes one DNA strand for the presence of a lesion. If a lesion is found the UvrA subunits dissociate and the UvrB-DNA preincision complex is formed. This complex is subsequently bound by UvrC and the second UvrB is released. If no lesion is found, the DNA wraps around the other UvrB subunit that will check the other stand for damage.</text>
</comment>
<comment type="subunit">
    <text evidence="1">Forms a heterotetramer with UvrA during the search for lesions. Interacts with UvrC in an incision complex.</text>
</comment>
<comment type="subcellular location">
    <subcellularLocation>
        <location evidence="1">Cytoplasm</location>
    </subcellularLocation>
</comment>
<comment type="domain">
    <text evidence="1">The beta-hairpin motif is involved in DNA binding.</text>
</comment>
<comment type="similarity">
    <text evidence="1">Belongs to the UvrB family.</text>
</comment>
<organism>
    <name type="scientific">Streptococcus pneumoniae (strain P1031)</name>
    <dbReference type="NCBI Taxonomy" id="488223"/>
    <lineage>
        <taxon>Bacteria</taxon>
        <taxon>Bacillati</taxon>
        <taxon>Bacillota</taxon>
        <taxon>Bacilli</taxon>
        <taxon>Lactobacillales</taxon>
        <taxon>Streptococcaceae</taxon>
        <taxon>Streptococcus</taxon>
    </lineage>
</organism>
<reference key="1">
    <citation type="journal article" date="2010" name="Genome Biol.">
        <title>Structure and dynamics of the pan-genome of Streptococcus pneumoniae and closely related species.</title>
        <authorList>
            <person name="Donati C."/>
            <person name="Hiller N.L."/>
            <person name="Tettelin H."/>
            <person name="Muzzi A."/>
            <person name="Croucher N.J."/>
            <person name="Angiuoli S.V."/>
            <person name="Oggioni M."/>
            <person name="Dunning Hotopp J.C."/>
            <person name="Hu F.Z."/>
            <person name="Riley D.R."/>
            <person name="Covacci A."/>
            <person name="Mitchell T.J."/>
            <person name="Bentley S.D."/>
            <person name="Kilian M."/>
            <person name="Ehrlich G.D."/>
            <person name="Rappuoli R."/>
            <person name="Moxon E.R."/>
            <person name="Masignani V."/>
        </authorList>
    </citation>
    <scope>NUCLEOTIDE SEQUENCE [LARGE SCALE GENOMIC DNA]</scope>
    <source>
        <strain>P1031</strain>
    </source>
</reference>
<proteinExistence type="inferred from homology"/>
<protein>
    <recommendedName>
        <fullName evidence="1">UvrABC system protein B</fullName>
        <shortName evidence="1">Protein UvrB</shortName>
    </recommendedName>
    <alternativeName>
        <fullName evidence="1">Excinuclease ABC subunit B</fullName>
    </alternativeName>
</protein>
<accession>C1CKX8</accession>
<keyword id="KW-0067">ATP-binding</keyword>
<keyword id="KW-0963">Cytoplasm</keyword>
<keyword id="KW-0227">DNA damage</keyword>
<keyword id="KW-0228">DNA excision</keyword>
<keyword id="KW-0234">DNA repair</keyword>
<keyword id="KW-0267">Excision nuclease</keyword>
<keyword id="KW-0347">Helicase</keyword>
<keyword id="KW-0378">Hydrolase</keyword>
<keyword id="KW-0547">Nucleotide-binding</keyword>
<keyword id="KW-0742">SOS response</keyword>
<sequence>MINHITDNQFKLVSKYQPSGDQPQAIEQLVDNIEGGEKAQILMGATGTGKTYTMSQVISKVNKPTLVIAHNKTLAGQLYGEFKEFFPENAVEYFVSYYDYYQPEAYVPSSDTYIEKDSSVNDEIDKLRHSATSALLERNDVIVVASVSCIYGLGSPKEYADSVVSLRPGLEISRDKLLNDLVDIQFERNDIDFQRGRFRVRGDVVEIFPASRDEHAFRVEFFGDEIDRIREVEALTGQVLGEVDHLAIFPATHFVTNDDHMEVAVAKIQAELEEQLAVFEKEGKLLEAQRLKQRTEYDIEMLREMGYTNGVENYSRHMDGRSEGEPPYTLLDFFPDDFLIMIDESHMTIGQIKGMYNGDRSRKEMLVNYGFRLPSALDNRPLRREEFESHVHQIVYVSATPGDYENEQTETVIEQIIRPTGLLDPEVEVRPTMGQIDDLLGEINARVEKNERTFITTLTKKMAEDLTDYFKEMGIKVKYMHSDIKTLERTEIIRDLRLGVFDVLVGINLLREGIDVPEVSLVAILDADKEGFLRNERGLIQTIGRAARNSEGHVIMYADTVTQSMQRAIDETARRRKIQMAYNEEHGIVPQTIKKEIRDLIAVTKAVAKEEDKEVDINSLNKQERKELVKKLEKQMQEAVEVLDFELAAQIRDMMLEVKALD</sequence>
<evidence type="ECO:0000255" key="1">
    <source>
        <dbReference type="HAMAP-Rule" id="MF_00204"/>
    </source>
</evidence>